<protein>
    <recommendedName>
        <fullName evidence="1">Large ribosomal subunit protein uL18</fullName>
    </recommendedName>
    <alternativeName>
        <fullName evidence="2">50S ribosomal protein L18</fullName>
    </alternativeName>
</protein>
<proteinExistence type="inferred from homology"/>
<dbReference type="EMBL" id="BA000036">
    <property type="protein sequence ID" value="BAB97932.1"/>
    <property type="molecule type" value="Genomic_DNA"/>
</dbReference>
<dbReference type="EMBL" id="BX927149">
    <property type="protein sequence ID" value="CAF19247.1"/>
    <property type="molecule type" value="Genomic_DNA"/>
</dbReference>
<dbReference type="RefSeq" id="NP_599778.1">
    <property type="nucleotide sequence ID" value="NC_003450.3"/>
</dbReference>
<dbReference type="RefSeq" id="WP_003854346.1">
    <property type="nucleotide sequence ID" value="NC_006958.1"/>
</dbReference>
<dbReference type="SMR" id="Q8NSX6"/>
<dbReference type="STRING" id="196627.cg0630"/>
<dbReference type="GeneID" id="1021541"/>
<dbReference type="KEGG" id="cgb:cg0630"/>
<dbReference type="KEGG" id="cgl:Cgl0539"/>
<dbReference type="PATRIC" id="fig|196627.13.peg.533"/>
<dbReference type="eggNOG" id="COG0256">
    <property type="taxonomic scope" value="Bacteria"/>
</dbReference>
<dbReference type="HOGENOM" id="CLU_098841_0_1_11"/>
<dbReference type="OrthoDB" id="9810939at2"/>
<dbReference type="BioCyc" id="CORYNE:G18NG-10101-MONOMER"/>
<dbReference type="Proteomes" id="UP000000582">
    <property type="component" value="Chromosome"/>
</dbReference>
<dbReference type="Proteomes" id="UP000001009">
    <property type="component" value="Chromosome"/>
</dbReference>
<dbReference type="GO" id="GO:0022625">
    <property type="term" value="C:cytosolic large ribosomal subunit"/>
    <property type="evidence" value="ECO:0007669"/>
    <property type="project" value="TreeGrafter"/>
</dbReference>
<dbReference type="GO" id="GO:0008097">
    <property type="term" value="F:5S rRNA binding"/>
    <property type="evidence" value="ECO:0007669"/>
    <property type="project" value="TreeGrafter"/>
</dbReference>
<dbReference type="GO" id="GO:0003735">
    <property type="term" value="F:structural constituent of ribosome"/>
    <property type="evidence" value="ECO:0007669"/>
    <property type="project" value="InterPro"/>
</dbReference>
<dbReference type="GO" id="GO:0006412">
    <property type="term" value="P:translation"/>
    <property type="evidence" value="ECO:0007669"/>
    <property type="project" value="UniProtKB-UniRule"/>
</dbReference>
<dbReference type="CDD" id="cd00432">
    <property type="entry name" value="Ribosomal_L18_L5e"/>
    <property type="match status" value="1"/>
</dbReference>
<dbReference type="FunFam" id="3.30.420.100:FF:000001">
    <property type="entry name" value="50S ribosomal protein L18"/>
    <property type="match status" value="1"/>
</dbReference>
<dbReference type="Gene3D" id="3.30.420.100">
    <property type="match status" value="1"/>
</dbReference>
<dbReference type="HAMAP" id="MF_01337_B">
    <property type="entry name" value="Ribosomal_uL18_B"/>
    <property type="match status" value="1"/>
</dbReference>
<dbReference type="InterPro" id="IPR004389">
    <property type="entry name" value="Ribosomal_uL18_bac-type"/>
</dbReference>
<dbReference type="InterPro" id="IPR005484">
    <property type="entry name" value="Ribosomal_uL18_bac/euk"/>
</dbReference>
<dbReference type="NCBIfam" id="TIGR00060">
    <property type="entry name" value="L18_bact"/>
    <property type="match status" value="1"/>
</dbReference>
<dbReference type="PANTHER" id="PTHR12899">
    <property type="entry name" value="39S RIBOSOMAL PROTEIN L18, MITOCHONDRIAL"/>
    <property type="match status" value="1"/>
</dbReference>
<dbReference type="PANTHER" id="PTHR12899:SF3">
    <property type="entry name" value="LARGE RIBOSOMAL SUBUNIT PROTEIN UL18M"/>
    <property type="match status" value="1"/>
</dbReference>
<dbReference type="Pfam" id="PF00861">
    <property type="entry name" value="Ribosomal_L18p"/>
    <property type="match status" value="1"/>
</dbReference>
<dbReference type="SUPFAM" id="SSF53137">
    <property type="entry name" value="Translational machinery components"/>
    <property type="match status" value="1"/>
</dbReference>
<organism>
    <name type="scientific">Corynebacterium glutamicum (strain ATCC 13032 / DSM 20300 / JCM 1318 / BCRC 11384 / CCUG 27702 / LMG 3730 / NBRC 12168 / NCIMB 10025 / NRRL B-2784 / 534)</name>
    <dbReference type="NCBI Taxonomy" id="196627"/>
    <lineage>
        <taxon>Bacteria</taxon>
        <taxon>Bacillati</taxon>
        <taxon>Actinomycetota</taxon>
        <taxon>Actinomycetes</taxon>
        <taxon>Mycobacteriales</taxon>
        <taxon>Corynebacteriaceae</taxon>
        <taxon>Corynebacterium</taxon>
    </lineage>
</organism>
<feature type="chain" id="PRO_0000131253" description="Large ribosomal subunit protein uL18">
    <location>
        <begin position="1"/>
        <end position="134"/>
    </location>
</feature>
<sequence>MSNTENKQKRVSVGKDIATRRRVARARRHFRIRKNLRGTPEAPRLVVHRSSRHMHVQIIDDVAGHTLAAASSIEAEVRATEGDKKAKGAKVGQLIAERAKAAGIEQVVFDRAGYKYHGRVAALADAAREGGLKF</sequence>
<comment type="function">
    <text evidence="1">This is one of the proteins that bind and probably mediate the attachment of the 5S RNA into the large ribosomal subunit, where it forms part of the central protuberance.</text>
</comment>
<comment type="subunit">
    <text evidence="1">Part of the 50S ribosomal subunit; part of the 5S rRNA/L5/L18/L25 subcomplex. Contacts the 5S and 23S rRNAs.</text>
</comment>
<comment type="similarity">
    <text evidence="1">Belongs to the universal ribosomal protein uL18 family.</text>
</comment>
<accession>Q8NSX6</accession>
<accession>Q6M7L0</accession>
<keyword id="KW-1185">Reference proteome</keyword>
<keyword id="KW-0687">Ribonucleoprotein</keyword>
<keyword id="KW-0689">Ribosomal protein</keyword>
<keyword id="KW-0694">RNA-binding</keyword>
<keyword id="KW-0699">rRNA-binding</keyword>
<gene>
    <name evidence="1" type="primary">rplR</name>
    <name type="ordered locus">Cgl0539</name>
    <name type="ordered locus">cg0630</name>
</gene>
<name>RL18_CORGL</name>
<reference key="1">
    <citation type="journal article" date="2003" name="Appl. Microbiol. Biotechnol.">
        <title>The Corynebacterium glutamicum genome: features and impacts on biotechnological processes.</title>
        <authorList>
            <person name="Ikeda M."/>
            <person name="Nakagawa S."/>
        </authorList>
    </citation>
    <scope>NUCLEOTIDE SEQUENCE [LARGE SCALE GENOMIC DNA]</scope>
    <source>
        <strain>ATCC 13032 / DSM 20300 / JCM 1318 / BCRC 11384 / CCUG 27702 / LMG 3730 / NBRC 12168 / NCIMB 10025 / NRRL B-2784 / 534</strain>
    </source>
</reference>
<reference key="2">
    <citation type="journal article" date="2003" name="J. Biotechnol.">
        <title>The complete Corynebacterium glutamicum ATCC 13032 genome sequence and its impact on the production of L-aspartate-derived amino acids and vitamins.</title>
        <authorList>
            <person name="Kalinowski J."/>
            <person name="Bathe B."/>
            <person name="Bartels D."/>
            <person name="Bischoff N."/>
            <person name="Bott M."/>
            <person name="Burkovski A."/>
            <person name="Dusch N."/>
            <person name="Eggeling L."/>
            <person name="Eikmanns B.J."/>
            <person name="Gaigalat L."/>
            <person name="Goesmann A."/>
            <person name="Hartmann M."/>
            <person name="Huthmacher K."/>
            <person name="Kraemer R."/>
            <person name="Linke B."/>
            <person name="McHardy A.C."/>
            <person name="Meyer F."/>
            <person name="Moeckel B."/>
            <person name="Pfefferle W."/>
            <person name="Puehler A."/>
            <person name="Rey D.A."/>
            <person name="Rueckert C."/>
            <person name="Rupp O."/>
            <person name="Sahm H."/>
            <person name="Wendisch V.F."/>
            <person name="Wiegraebe I."/>
            <person name="Tauch A."/>
        </authorList>
    </citation>
    <scope>NUCLEOTIDE SEQUENCE [LARGE SCALE GENOMIC DNA]</scope>
    <source>
        <strain>ATCC 13032 / DSM 20300 / JCM 1318 / BCRC 11384 / CCUG 27702 / LMG 3730 / NBRC 12168 / NCIMB 10025 / NRRL B-2784 / 534</strain>
    </source>
</reference>
<evidence type="ECO:0000255" key="1">
    <source>
        <dbReference type="HAMAP-Rule" id="MF_01337"/>
    </source>
</evidence>
<evidence type="ECO:0000305" key="2"/>